<sequence length="625" mass="70202">MSLSSCLLPFSQSATAPSSSVCSCHLAASFSNFPVSSRDYSFSRSGSLVLNGGGSNLCRRFCGLKLWILKSLNRRQGNNRKHQPVNELTTHSKHTFLSDDERGFAEETRAEDLRPEENILGTDLNDGFHNVGDLPPVSKQLSDDLSDVRRRASLCIAVVGATGELARGKIFPALFALYYSGYLPEDVAIFGVSRKNLTDEDLRSIIASTLTCRVDHQENCGGKMDAFQSRTYYINGGYNNRDGMSRLAERMKQIEGESEANRIFYLSVPQEALVDVACTIGDNAQAPRGWTRIIVEKPFGFNSHSSHQLTKSLLSKFEEKQIYRIDHMLGRNLIENLTVLRFSNLVFEPLWNRTYIRNIQVIISESIAQTEKFSDGYGIIRDIVHSHILQTIALLAMEPPISLDGEDIRNEKVKVLRSIRKIDPRDVILGQYKSSSRDKNGVILNGVDPTYCAAALYIDNARWDGVPFLVRVGTGLIKHRVEIHVQFRHVPGNLYRENIGINIDLGTNELILRDEPDEAILVKINNKVPGLGLQLDASELNLLYKDRYKTEVPDSYEHLIHDVIDGDNHLFMRSDEVAAAWNILSPVLEEIDKHHTAPELYEFGGRGPVAAYYLWAKHGVPWADD</sequence>
<dbReference type="EMBL" id="AC003970">
    <property type="protein sequence ID" value="AAC33202.1"/>
    <property type="status" value="ALT_SEQ"/>
    <property type="molecule type" value="Genomic_DNA"/>
</dbReference>
<dbReference type="EMBL" id="CP002684">
    <property type="protein sequence ID" value="AEE28440.1"/>
    <property type="molecule type" value="Genomic_DNA"/>
</dbReference>
<dbReference type="EMBL" id="AY056232">
    <property type="protein sequence ID" value="AAL07081.1"/>
    <property type="molecule type" value="mRNA"/>
</dbReference>
<dbReference type="EMBL" id="AY117271">
    <property type="protein sequence ID" value="AAM51346.1"/>
    <property type="molecule type" value="mRNA"/>
</dbReference>
<dbReference type="PIR" id="E86227">
    <property type="entry name" value="E86227"/>
</dbReference>
<dbReference type="RefSeq" id="NP_563844.1">
    <molecule id="Q93ZW0-1"/>
    <property type="nucleotide sequence ID" value="NM_100813.2"/>
</dbReference>
<dbReference type="SMR" id="Q93ZW0"/>
<dbReference type="BioGRID" id="22706">
    <property type="interactions" value="2"/>
</dbReference>
<dbReference type="FunCoup" id="Q93ZW0">
    <property type="interactions" value="369"/>
</dbReference>
<dbReference type="STRING" id="3702.Q93ZW0"/>
<dbReference type="iPTMnet" id="Q93ZW0"/>
<dbReference type="PaxDb" id="3702-AT1G09420.2"/>
<dbReference type="ProteomicsDB" id="230469">
    <molecule id="Q93ZW0-1"/>
</dbReference>
<dbReference type="EnsemblPlants" id="AT1G09420.1">
    <molecule id="Q93ZW0-1"/>
    <property type="protein sequence ID" value="AT1G09420.1"/>
    <property type="gene ID" value="AT1G09420"/>
</dbReference>
<dbReference type="GeneID" id="837465"/>
<dbReference type="Gramene" id="AT1G09420.1">
    <molecule id="Q93ZW0-1"/>
    <property type="protein sequence ID" value="AT1G09420.1"/>
    <property type="gene ID" value="AT1G09420"/>
</dbReference>
<dbReference type="KEGG" id="ath:AT1G09420"/>
<dbReference type="Araport" id="AT1G09420"/>
<dbReference type="TAIR" id="AT1G09420">
    <property type="gene designation" value="G6PD4"/>
</dbReference>
<dbReference type="eggNOG" id="KOG0563">
    <property type="taxonomic scope" value="Eukaryota"/>
</dbReference>
<dbReference type="HOGENOM" id="CLU_013524_1_0_1"/>
<dbReference type="InParanoid" id="Q93ZW0"/>
<dbReference type="PhylomeDB" id="Q93ZW0"/>
<dbReference type="BioCyc" id="ARA:AT1G09420-MONOMER"/>
<dbReference type="BRENDA" id="1.1.1.49">
    <property type="organism ID" value="399"/>
</dbReference>
<dbReference type="PRO" id="PR:Q93ZW0"/>
<dbReference type="Proteomes" id="UP000006548">
    <property type="component" value="Chromosome 1"/>
</dbReference>
<dbReference type="ExpressionAtlas" id="Q93ZW0">
    <property type="expression patterns" value="baseline and differential"/>
</dbReference>
<dbReference type="GO" id="GO:0009570">
    <property type="term" value="C:chloroplast stroma"/>
    <property type="evidence" value="ECO:0007669"/>
    <property type="project" value="UniProtKB-SubCell"/>
</dbReference>
<dbReference type="GO" id="GO:0004345">
    <property type="term" value="F:glucose-6-phosphate dehydrogenase activity"/>
    <property type="evidence" value="ECO:0007669"/>
    <property type="project" value="InterPro"/>
</dbReference>
<dbReference type="GO" id="GO:0050661">
    <property type="term" value="F:NADP binding"/>
    <property type="evidence" value="ECO:0007669"/>
    <property type="project" value="InterPro"/>
</dbReference>
<dbReference type="GO" id="GO:0006006">
    <property type="term" value="P:glucose metabolic process"/>
    <property type="evidence" value="ECO:0007669"/>
    <property type="project" value="UniProtKB-KW"/>
</dbReference>
<dbReference type="GO" id="GO:0006098">
    <property type="term" value="P:pentose-phosphate shunt"/>
    <property type="evidence" value="ECO:0007669"/>
    <property type="project" value="UniProtKB-ARBA"/>
</dbReference>
<dbReference type="FunFam" id="3.30.360.10:FF:000018">
    <property type="entry name" value="Glucose-6-phosphate 1-dehydrogenase"/>
    <property type="match status" value="1"/>
</dbReference>
<dbReference type="FunFam" id="3.40.50.720:FF:000222">
    <property type="entry name" value="Glucose-6-phosphate 1-dehydrogenase"/>
    <property type="match status" value="1"/>
</dbReference>
<dbReference type="Gene3D" id="3.30.360.10">
    <property type="entry name" value="Dihydrodipicolinate Reductase, domain 2"/>
    <property type="match status" value="1"/>
</dbReference>
<dbReference type="Gene3D" id="3.40.50.720">
    <property type="entry name" value="NAD(P)-binding Rossmann-like Domain"/>
    <property type="match status" value="1"/>
</dbReference>
<dbReference type="HAMAP" id="MF_00966">
    <property type="entry name" value="G6PD"/>
    <property type="match status" value="1"/>
</dbReference>
<dbReference type="InterPro" id="IPR001282">
    <property type="entry name" value="G6P_DH"/>
</dbReference>
<dbReference type="InterPro" id="IPR022675">
    <property type="entry name" value="G6P_DH_C"/>
</dbReference>
<dbReference type="InterPro" id="IPR022674">
    <property type="entry name" value="G6P_DH_NAD-bd"/>
</dbReference>
<dbReference type="InterPro" id="IPR036291">
    <property type="entry name" value="NAD(P)-bd_dom_sf"/>
</dbReference>
<dbReference type="NCBIfam" id="TIGR00871">
    <property type="entry name" value="zwf"/>
    <property type="match status" value="1"/>
</dbReference>
<dbReference type="PANTHER" id="PTHR23429">
    <property type="entry name" value="GLUCOSE-6-PHOSPHATE 1-DEHYDROGENASE G6PD"/>
    <property type="match status" value="1"/>
</dbReference>
<dbReference type="PANTHER" id="PTHR23429:SF4">
    <property type="entry name" value="INACTIVE GLUCOSE-6-PHOSPHATE 1-DEHYDROGENASE 4, CHLOROPLASTIC"/>
    <property type="match status" value="1"/>
</dbReference>
<dbReference type="Pfam" id="PF02781">
    <property type="entry name" value="G6PD_C"/>
    <property type="match status" value="1"/>
</dbReference>
<dbReference type="Pfam" id="PF00479">
    <property type="entry name" value="G6PD_N"/>
    <property type="match status" value="1"/>
</dbReference>
<dbReference type="PRINTS" id="PR00079">
    <property type="entry name" value="G6PDHDRGNASE"/>
</dbReference>
<dbReference type="SUPFAM" id="SSF55347">
    <property type="entry name" value="Glyceraldehyde-3-phosphate dehydrogenase-like, C-terminal domain"/>
    <property type="match status" value="1"/>
</dbReference>
<dbReference type="SUPFAM" id="SSF51735">
    <property type="entry name" value="NAD(P)-binding Rossmann-fold domains"/>
    <property type="match status" value="1"/>
</dbReference>
<protein>
    <recommendedName>
        <fullName evidence="8">Inactive glucose-6-phosphate 1-dehydrogenase 4, chloroplastic</fullName>
        <shortName evidence="7">AtG6PD4</shortName>
        <shortName evidence="8">G6PDH4</shortName>
    </recommendedName>
</protein>
<name>G6PD4_ARATH</name>
<gene>
    <name evidence="7" type="primary">G6PD4</name>
    <name evidence="9" type="ordered locus">At1g09420</name>
    <name evidence="10" type="ORF">F14J9.8</name>
</gene>
<accession>Q93ZW0</accession>
<accession>O80525</accession>
<reference key="1">
    <citation type="journal article" date="2000" name="Nature">
        <title>Sequence and analysis of chromosome 1 of the plant Arabidopsis thaliana.</title>
        <authorList>
            <person name="Theologis A."/>
            <person name="Ecker J.R."/>
            <person name="Palm C.J."/>
            <person name="Federspiel N.A."/>
            <person name="Kaul S."/>
            <person name="White O."/>
            <person name="Alonso J."/>
            <person name="Altafi H."/>
            <person name="Araujo R."/>
            <person name="Bowman C.L."/>
            <person name="Brooks S.Y."/>
            <person name="Buehler E."/>
            <person name="Chan A."/>
            <person name="Chao Q."/>
            <person name="Chen H."/>
            <person name="Cheuk R.F."/>
            <person name="Chin C.W."/>
            <person name="Chung M.K."/>
            <person name="Conn L."/>
            <person name="Conway A.B."/>
            <person name="Conway A.R."/>
            <person name="Creasy T.H."/>
            <person name="Dewar K."/>
            <person name="Dunn P."/>
            <person name="Etgu P."/>
            <person name="Feldblyum T.V."/>
            <person name="Feng J.-D."/>
            <person name="Fong B."/>
            <person name="Fujii C.Y."/>
            <person name="Gill J.E."/>
            <person name="Goldsmith A.D."/>
            <person name="Haas B."/>
            <person name="Hansen N.F."/>
            <person name="Hughes B."/>
            <person name="Huizar L."/>
            <person name="Hunter J.L."/>
            <person name="Jenkins J."/>
            <person name="Johnson-Hopson C."/>
            <person name="Khan S."/>
            <person name="Khaykin E."/>
            <person name="Kim C.J."/>
            <person name="Koo H.L."/>
            <person name="Kremenetskaia I."/>
            <person name="Kurtz D.B."/>
            <person name="Kwan A."/>
            <person name="Lam B."/>
            <person name="Langin-Hooper S."/>
            <person name="Lee A."/>
            <person name="Lee J.M."/>
            <person name="Lenz C.A."/>
            <person name="Li J.H."/>
            <person name="Li Y.-P."/>
            <person name="Lin X."/>
            <person name="Liu S.X."/>
            <person name="Liu Z.A."/>
            <person name="Luros J.S."/>
            <person name="Maiti R."/>
            <person name="Marziali A."/>
            <person name="Militscher J."/>
            <person name="Miranda M."/>
            <person name="Nguyen M."/>
            <person name="Nierman W.C."/>
            <person name="Osborne B.I."/>
            <person name="Pai G."/>
            <person name="Peterson J."/>
            <person name="Pham P.K."/>
            <person name="Rizzo M."/>
            <person name="Rooney T."/>
            <person name="Rowley D."/>
            <person name="Sakano H."/>
            <person name="Salzberg S.L."/>
            <person name="Schwartz J.R."/>
            <person name="Shinn P."/>
            <person name="Southwick A.M."/>
            <person name="Sun H."/>
            <person name="Tallon L.J."/>
            <person name="Tambunga G."/>
            <person name="Toriumi M.J."/>
            <person name="Town C.D."/>
            <person name="Utterback T."/>
            <person name="Van Aken S."/>
            <person name="Vaysberg M."/>
            <person name="Vysotskaia V.S."/>
            <person name="Walker M."/>
            <person name="Wu D."/>
            <person name="Yu G."/>
            <person name="Fraser C.M."/>
            <person name="Venter J.C."/>
            <person name="Davis R.W."/>
        </authorList>
    </citation>
    <scope>NUCLEOTIDE SEQUENCE [LARGE SCALE GENOMIC DNA]</scope>
    <source>
        <strain>cv. Columbia</strain>
    </source>
</reference>
<reference key="2">
    <citation type="journal article" date="2017" name="Plant J.">
        <title>Araport11: a complete reannotation of the Arabidopsis thaliana reference genome.</title>
        <authorList>
            <person name="Cheng C.Y."/>
            <person name="Krishnakumar V."/>
            <person name="Chan A.P."/>
            <person name="Thibaud-Nissen F."/>
            <person name="Schobel S."/>
            <person name="Town C.D."/>
        </authorList>
    </citation>
    <scope>GENOME REANNOTATION</scope>
    <source>
        <strain>cv. Columbia</strain>
    </source>
</reference>
<reference key="3">
    <citation type="journal article" date="2003" name="Science">
        <title>Empirical analysis of transcriptional activity in the Arabidopsis genome.</title>
        <authorList>
            <person name="Yamada K."/>
            <person name="Lim J."/>
            <person name="Dale J.M."/>
            <person name="Chen H."/>
            <person name="Shinn P."/>
            <person name="Palm C.J."/>
            <person name="Southwick A.M."/>
            <person name="Wu H.C."/>
            <person name="Kim C.J."/>
            <person name="Nguyen M."/>
            <person name="Pham P.K."/>
            <person name="Cheuk R.F."/>
            <person name="Karlin-Newmann G."/>
            <person name="Liu S.X."/>
            <person name="Lam B."/>
            <person name="Sakano H."/>
            <person name="Wu T."/>
            <person name="Yu G."/>
            <person name="Miranda M."/>
            <person name="Quach H.L."/>
            <person name="Tripp M."/>
            <person name="Chang C.H."/>
            <person name="Lee J.M."/>
            <person name="Toriumi M.J."/>
            <person name="Chan M.M."/>
            <person name="Tang C.C."/>
            <person name="Onodera C.S."/>
            <person name="Deng J.M."/>
            <person name="Akiyama K."/>
            <person name="Ansari Y."/>
            <person name="Arakawa T."/>
            <person name="Banh J."/>
            <person name="Banno F."/>
            <person name="Bowser L."/>
            <person name="Brooks S.Y."/>
            <person name="Carninci P."/>
            <person name="Chao Q."/>
            <person name="Choy N."/>
            <person name="Enju A."/>
            <person name="Goldsmith A.D."/>
            <person name="Gurjal M."/>
            <person name="Hansen N.F."/>
            <person name="Hayashizaki Y."/>
            <person name="Johnson-Hopson C."/>
            <person name="Hsuan V.W."/>
            <person name="Iida K."/>
            <person name="Karnes M."/>
            <person name="Khan S."/>
            <person name="Koesema E."/>
            <person name="Ishida J."/>
            <person name="Jiang P.X."/>
            <person name="Jones T."/>
            <person name="Kawai J."/>
            <person name="Kamiya A."/>
            <person name="Meyers C."/>
            <person name="Nakajima M."/>
            <person name="Narusaka M."/>
            <person name="Seki M."/>
            <person name="Sakurai T."/>
            <person name="Satou M."/>
            <person name="Tamse R."/>
            <person name="Vaysberg M."/>
            <person name="Wallender E.K."/>
            <person name="Wong C."/>
            <person name="Yamamura Y."/>
            <person name="Yuan S."/>
            <person name="Shinozaki K."/>
            <person name="Davis R.W."/>
            <person name="Theologis A."/>
            <person name="Ecker J.R."/>
        </authorList>
    </citation>
    <scope>NUCLEOTIDE SEQUENCE [LARGE SCALE MRNA]</scope>
    <source>
        <strain>cv. Columbia</strain>
    </source>
</reference>
<reference key="4">
    <citation type="journal article" date="2005" name="Plant J.">
        <title>Genome-wide analysis of glucose-6-phosphate dehydrogenases in Arabidopsis.</title>
        <authorList>
            <person name="Wakao S."/>
            <person name="Benning C."/>
        </authorList>
    </citation>
    <scope>TISSUE SPECIFICITY</scope>
</reference>
<reference key="5">
    <citation type="journal article" date="2011" name="Plant J.">
        <title>Alternative targeting of Arabidopsis plastidic glucose-6-phosphate dehydrogenase G6PD1 involves cysteine-dependent interaction with G6PD4 in the cytosol.</title>
        <authorList>
            <person name="Meyer T."/>
            <person name="Hoelscher C."/>
            <person name="Schwoeppe C."/>
            <person name="von Schaewen A."/>
        </authorList>
    </citation>
    <scope>FUNCTION</scope>
    <scope>INTERACTION WITH G6PD1</scope>
    <scope>SUBCELLULAR LOCATION</scope>
    <scope>MUTAGENESIS OF CYS-212 AND CYS-220</scope>
</reference>
<feature type="transit peptide" description="Chloroplast" evidence="4">
    <location>
        <begin position="1"/>
        <end position="49"/>
    </location>
</feature>
<feature type="chain" id="PRO_0000010438" description="Inactive glucose-6-phosphate 1-dehydrogenase 4, chloroplastic">
    <location>
        <begin position="50"/>
        <end position="625"/>
    </location>
</feature>
<feature type="active site" description="Proton acceptor" evidence="1">
    <location>
        <position position="387"/>
    </location>
</feature>
<feature type="binding site" evidence="2">
    <location>
        <begin position="160"/>
        <end position="167"/>
    </location>
    <ligand>
        <name>NADP(+)</name>
        <dbReference type="ChEBI" id="CHEBI:58349"/>
        <label>1</label>
    </ligand>
</feature>
<feature type="binding site" evidence="2">
    <location>
        <position position="194"/>
    </location>
    <ligand>
        <name>NADP(+)</name>
        <dbReference type="ChEBI" id="CHEBI:58349"/>
        <label>1</label>
    </ligand>
</feature>
<feature type="binding site" evidence="2">
    <location>
        <position position="297"/>
    </location>
    <ligand>
        <name>D-glucose 6-phosphate</name>
        <dbReference type="ChEBI" id="CHEBI:61548"/>
    </ligand>
</feature>
<feature type="binding site" evidence="2">
    <location>
        <position position="297"/>
    </location>
    <ligand>
        <name>NADP(+)</name>
        <dbReference type="ChEBI" id="CHEBI:58349"/>
        <label>1</label>
    </ligand>
</feature>
<feature type="binding site" evidence="2">
    <location>
        <begin position="327"/>
        <end position="331"/>
    </location>
    <ligand>
        <name>D-glucose 6-phosphate</name>
        <dbReference type="ChEBI" id="CHEBI:61548"/>
    </ligand>
</feature>
<feature type="binding site" evidence="2">
    <location>
        <position position="365"/>
    </location>
    <ligand>
        <name>D-glucose 6-phosphate</name>
        <dbReference type="ChEBI" id="CHEBI:61548"/>
    </ligand>
</feature>
<feature type="binding site" evidence="2">
    <location>
        <position position="382"/>
    </location>
    <ligand>
        <name>D-glucose 6-phosphate</name>
        <dbReference type="ChEBI" id="CHEBI:61548"/>
    </ligand>
</feature>
<feature type="binding site" evidence="2">
    <location>
        <position position="471"/>
    </location>
    <ligand>
        <name>NADP(+)</name>
        <dbReference type="ChEBI" id="CHEBI:58349"/>
        <label>2</label>
    </ligand>
</feature>
<feature type="binding site" evidence="2">
    <location>
        <position position="480"/>
    </location>
    <ligand>
        <name>NADP(+)</name>
        <dbReference type="ChEBI" id="CHEBI:58349"/>
        <label>2</label>
    </ligand>
</feature>
<feature type="binding site" evidence="2">
    <location>
        <position position="513"/>
    </location>
    <ligand>
        <name>NADP(+)</name>
        <dbReference type="ChEBI" id="CHEBI:58349"/>
        <label>2</label>
    </ligand>
</feature>
<feature type="binding site" evidence="2">
    <location>
        <position position="606"/>
    </location>
    <ligand>
        <name>NADP(+)</name>
        <dbReference type="ChEBI" id="CHEBI:58349"/>
        <label>2</label>
    </ligand>
</feature>
<feature type="disulfide bond" description="Redox modulation" evidence="3">
    <location>
        <begin position="212"/>
        <end position="220"/>
    </location>
</feature>
<feature type="mutagenesis site" description="Abolishes interaction with G6PD1." evidence="6">
    <original>C</original>
    <variation>S</variation>
    <location>
        <position position="212"/>
    </location>
</feature>
<feature type="mutagenesis site" description="Abolishes interaction with G6PD1." evidence="6">
    <original>C</original>
    <variation>S</variation>
    <location>
        <position position="220"/>
    </location>
</feature>
<organism>
    <name type="scientific">Arabidopsis thaliana</name>
    <name type="common">Mouse-ear cress</name>
    <dbReference type="NCBI Taxonomy" id="3702"/>
    <lineage>
        <taxon>Eukaryota</taxon>
        <taxon>Viridiplantae</taxon>
        <taxon>Streptophyta</taxon>
        <taxon>Embryophyta</taxon>
        <taxon>Tracheophyta</taxon>
        <taxon>Spermatophyta</taxon>
        <taxon>Magnoliopsida</taxon>
        <taxon>eudicotyledons</taxon>
        <taxon>Gunneridae</taxon>
        <taxon>Pentapetalae</taxon>
        <taxon>rosids</taxon>
        <taxon>malvids</taxon>
        <taxon>Brassicales</taxon>
        <taxon>Brassicaceae</taxon>
        <taxon>Camelineae</taxon>
        <taxon>Arabidopsis</taxon>
    </lineage>
</organism>
<keyword id="KW-0025">Alternative splicing</keyword>
<keyword id="KW-0119">Carbohydrate metabolism</keyword>
<keyword id="KW-0150">Chloroplast</keyword>
<keyword id="KW-1015">Disulfide bond</keyword>
<keyword id="KW-0313">Glucose metabolism</keyword>
<keyword id="KW-0521">NADP</keyword>
<keyword id="KW-0934">Plastid</keyword>
<keyword id="KW-1185">Reference proteome</keyword>
<keyword id="KW-0809">Transit peptide</keyword>
<proteinExistence type="evidence at protein level"/>
<comment type="function">
    <text evidence="6">Seems to be a catalytically inactive enzyme.</text>
</comment>
<comment type="subunit">
    <text evidence="1 6">Forms homodimer (By similarity). Interacts with G6PD1 (PubMed:21309870).</text>
</comment>
<comment type="subcellular location">
    <subcellularLocation>
        <location evidence="6">Plastid</location>
        <location evidence="6">Chloroplast stroma</location>
    </subcellularLocation>
</comment>
<comment type="alternative products">
    <event type="alternative splicing"/>
    <isoform>
        <id>Q93ZW0-1</id>
        <name>1</name>
        <sequence type="displayed"/>
    </isoform>
    <text evidence="8">A number of isoforms are produced. According to EST sequences.</text>
</comment>
<comment type="tissue specificity">
    <text evidence="5">Expressed in leaves, stems and buds.</text>
</comment>
<comment type="miscellaneous">
    <text evidence="7">There are 6 glucose-6-phosphate 1-dehydrogenase genes in A.thaliana.</text>
</comment>
<comment type="similarity">
    <text evidence="8">Belongs to the glucose-6-phosphate dehydrogenase family.</text>
</comment>
<comment type="sequence caution" evidence="8">
    <conflict type="erroneous gene model prediction">
        <sequence resource="EMBL-CDS" id="AAC33202"/>
    </conflict>
</comment>
<evidence type="ECO:0000250" key="1">
    <source>
        <dbReference type="UniProtKB" id="P11411"/>
    </source>
</evidence>
<evidence type="ECO:0000250" key="2">
    <source>
        <dbReference type="UniProtKB" id="P11413"/>
    </source>
</evidence>
<evidence type="ECO:0000250" key="3">
    <source>
        <dbReference type="UniProtKB" id="Q43839"/>
    </source>
</evidence>
<evidence type="ECO:0000255" key="4"/>
<evidence type="ECO:0000269" key="5">
    <source>
    </source>
</evidence>
<evidence type="ECO:0000269" key="6">
    <source>
    </source>
</evidence>
<evidence type="ECO:0000303" key="7">
    <source>
    </source>
</evidence>
<evidence type="ECO:0000305" key="8"/>
<evidence type="ECO:0000312" key="9">
    <source>
        <dbReference type="Araport" id="AT1G09420"/>
    </source>
</evidence>
<evidence type="ECO:0000312" key="10">
    <source>
        <dbReference type="EMBL" id="AAC33202.1"/>
    </source>
</evidence>